<organism>
    <name type="scientific">Escherichia coli O45:K1 (strain S88 / ExPEC)</name>
    <dbReference type="NCBI Taxonomy" id="585035"/>
    <lineage>
        <taxon>Bacteria</taxon>
        <taxon>Pseudomonadati</taxon>
        <taxon>Pseudomonadota</taxon>
        <taxon>Gammaproteobacteria</taxon>
        <taxon>Enterobacterales</taxon>
        <taxon>Enterobacteriaceae</taxon>
        <taxon>Escherichia</taxon>
    </lineage>
</organism>
<reference key="1">
    <citation type="journal article" date="2009" name="PLoS Genet.">
        <title>Organised genome dynamics in the Escherichia coli species results in highly diverse adaptive paths.</title>
        <authorList>
            <person name="Touchon M."/>
            <person name="Hoede C."/>
            <person name="Tenaillon O."/>
            <person name="Barbe V."/>
            <person name="Baeriswyl S."/>
            <person name="Bidet P."/>
            <person name="Bingen E."/>
            <person name="Bonacorsi S."/>
            <person name="Bouchier C."/>
            <person name="Bouvet O."/>
            <person name="Calteau A."/>
            <person name="Chiapello H."/>
            <person name="Clermont O."/>
            <person name="Cruveiller S."/>
            <person name="Danchin A."/>
            <person name="Diard M."/>
            <person name="Dossat C."/>
            <person name="Karoui M.E."/>
            <person name="Frapy E."/>
            <person name="Garry L."/>
            <person name="Ghigo J.M."/>
            <person name="Gilles A.M."/>
            <person name="Johnson J."/>
            <person name="Le Bouguenec C."/>
            <person name="Lescat M."/>
            <person name="Mangenot S."/>
            <person name="Martinez-Jehanne V."/>
            <person name="Matic I."/>
            <person name="Nassif X."/>
            <person name="Oztas S."/>
            <person name="Petit M.A."/>
            <person name="Pichon C."/>
            <person name="Rouy Z."/>
            <person name="Ruf C.S."/>
            <person name="Schneider D."/>
            <person name="Tourret J."/>
            <person name="Vacherie B."/>
            <person name="Vallenet D."/>
            <person name="Medigue C."/>
            <person name="Rocha E.P.C."/>
            <person name="Denamur E."/>
        </authorList>
    </citation>
    <scope>NUCLEOTIDE SEQUENCE [LARGE SCALE GENOMIC DNA]</scope>
    <source>
        <strain>S88 / ExPEC</strain>
    </source>
</reference>
<keyword id="KW-0067">ATP-binding</keyword>
<keyword id="KW-0418">Kinase</keyword>
<keyword id="KW-0460">Magnesium</keyword>
<keyword id="KW-0479">Metal-binding</keyword>
<keyword id="KW-0547">Nucleotide-binding</keyword>
<keyword id="KW-1185">Reference proteome</keyword>
<keyword id="KW-0808">Transferase</keyword>
<keyword id="KW-0862">Zinc</keyword>
<sequence length="283" mass="30848">MSSLLLFNDKSRALQADIVAVQSQVVYGSVGNSIAVPAIKQNGLNVFAVPTVLLSNTPHYDTFYGGAIPDEWFSGYLRALQERDALRQLRAVTTGYMGTASQIKILAEWLTALRKDHPDLLIMVDPVIGDIDSGIYVKPDLPEAYRQYLLPLAQGITPNIFELEILTGKDCRDLDSAIAAAKSLLSDTLKWVVITSASGNEENQEMQVVVVSADSVNVISHSRVKTDLKGTGDLFCAQLISGLLKGKALTDAVHRAGLRVLEVMRYTQQHESDELILPPLAEA</sequence>
<accession>B7MHS2</accession>
<gene>
    <name evidence="1" type="primary">pdxK</name>
    <name type="ordered locus">ECS88_2608</name>
</gene>
<name>PDXK_ECO45</name>
<dbReference type="EC" id="2.7.1.35" evidence="1"/>
<dbReference type="EMBL" id="CU928161">
    <property type="protein sequence ID" value="CAR03880.1"/>
    <property type="molecule type" value="Genomic_DNA"/>
</dbReference>
<dbReference type="RefSeq" id="WP_000096640.1">
    <property type="nucleotide sequence ID" value="NC_011742.1"/>
</dbReference>
<dbReference type="SMR" id="B7MHS2"/>
<dbReference type="KEGG" id="ecz:ECS88_2608"/>
<dbReference type="HOGENOM" id="CLU_046496_3_1_6"/>
<dbReference type="UniPathway" id="UPA01068">
    <property type="reaction ID" value="UER00298"/>
</dbReference>
<dbReference type="UniPathway" id="UPA01068">
    <property type="reaction ID" value="UER00299"/>
</dbReference>
<dbReference type="UniPathway" id="UPA01068">
    <property type="reaction ID" value="UER00300"/>
</dbReference>
<dbReference type="Proteomes" id="UP000000747">
    <property type="component" value="Chromosome"/>
</dbReference>
<dbReference type="GO" id="GO:0005829">
    <property type="term" value="C:cytosol"/>
    <property type="evidence" value="ECO:0007669"/>
    <property type="project" value="TreeGrafter"/>
</dbReference>
<dbReference type="GO" id="GO:0005524">
    <property type="term" value="F:ATP binding"/>
    <property type="evidence" value="ECO:0007669"/>
    <property type="project" value="UniProtKB-UniRule"/>
</dbReference>
<dbReference type="GO" id="GO:0008902">
    <property type="term" value="F:hydroxymethylpyrimidine kinase activity"/>
    <property type="evidence" value="ECO:0007669"/>
    <property type="project" value="TreeGrafter"/>
</dbReference>
<dbReference type="GO" id="GO:0000287">
    <property type="term" value="F:magnesium ion binding"/>
    <property type="evidence" value="ECO:0007669"/>
    <property type="project" value="UniProtKB-UniRule"/>
</dbReference>
<dbReference type="GO" id="GO:0008478">
    <property type="term" value="F:pyridoxal kinase activity"/>
    <property type="evidence" value="ECO:0007669"/>
    <property type="project" value="UniProtKB-UniRule"/>
</dbReference>
<dbReference type="GO" id="GO:0008270">
    <property type="term" value="F:zinc ion binding"/>
    <property type="evidence" value="ECO:0007669"/>
    <property type="project" value="UniProtKB-UniRule"/>
</dbReference>
<dbReference type="GO" id="GO:0009443">
    <property type="term" value="P:pyridoxal 5'-phosphate salvage"/>
    <property type="evidence" value="ECO:0007669"/>
    <property type="project" value="UniProtKB-UniRule"/>
</dbReference>
<dbReference type="CDD" id="cd01173">
    <property type="entry name" value="pyridoxal_pyridoxamine_kinase"/>
    <property type="match status" value="1"/>
</dbReference>
<dbReference type="FunFam" id="3.40.1190.20:FF:000009">
    <property type="entry name" value="Pyridoxine/pyridoxal/pyridoxamine kinase"/>
    <property type="match status" value="1"/>
</dbReference>
<dbReference type="Gene3D" id="3.40.1190.20">
    <property type="match status" value="1"/>
</dbReference>
<dbReference type="HAMAP" id="MF_01638">
    <property type="entry name" value="PdxK"/>
    <property type="match status" value="1"/>
</dbReference>
<dbReference type="InterPro" id="IPR023479">
    <property type="entry name" value="PdxK"/>
</dbReference>
<dbReference type="InterPro" id="IPR013749">
    <property type="entry name" value="PM/HMP-P_kinase-1"/>
</dbReference>
<dbReference type="InterPro" id="IPR004625">
    <property type="entry name" value="PyrdxlKinase"/>
</dbReference>
<dbReference type="InterPro" id="IPR029056">
    <property type="entry name" value="Ribokinase-like"/>
</dbReference>
<dbReference type="NCBIfam" id="NF006034">
    <property type="entry name" value="PRK08176.1"/>
    <property type="match status" value="1"/>
</dbReference>
<dbReference type="NCBIfam" id="TIGR00687">
    <property type="entry name" value="pyridox_kin"/>
    <property type="match status" value="1"/>
</dbReference>
<dbReference type="PANTHER" id="PTHR10534">
    <property type="entry name" value="PYRIDOXAL KINASE"/>
    <property type="match status" value="1"/>
</dbReference>
<dbReference type="PANTHER" id="PTHR10534:SF15">
    <property type="entry name" value="PYRIDOXINE_PYRIDOXAL_PYRIDOXAMINE KINASE"/>
    <property type="match status" value="1"/>
</dbReference>
<dbReference type="Pfam" id="PF08543">
    <property type="entry name" value="Phos_pyr_kin"/>
    <property type="match status" value="1"/>
</dbReference>
<dbReference type="SUPFAM" id="SSF53613">
    <property type="entry name" value="Ribokinase-like"/>
    <property type="match status" value="1"/>
</dbReference>
<comment type="function">
    <text evidence="1">B6-vitamer kinase involved in the salvage pathway of pyridoxal 5'-phosphate (PLP). Catalyzes the phosphorylation of pyridoxine (PN), pyridoxal (PL), and pyridoxamine (PM), forming their respective 5'-phosphorylated esters, i.e. PNP, PLP and PMP.</text>
</comment>
<comment type="catalytic activity">
    <reaction evidence="1">
        <text>pyridoxal + ATP = pyridoxal 5'-phosphate + ADP + H(+)</text>
        <dbReference type="Rhea" id="RHEA:10224"/>
        <dbReference type="ChEBI" id="CHEBI:15378"/>
        <dbReference type="ChEBI" id="CHEBI:17310"/>
        <dbReference type="ChEBI" id="CHEBI:30616"/>
        <dbReference type="ChEBI" id="CHEBI:456216"/>
        <dbReference type="ChEBI" id="CHEBI:597326"/>
        <dbReference type="EC" id="2.7.1.35"/>
    </reaction>
</comment>
<comment type="catalytic activity">
    <reaction evidence="1">
        <text>pyridoxine + ATP = pyridoxine 5'-phosphate + ADP + H(+)</text>
        <dbReference type="Rhea" id="RHEA:25108"/>
        <dbReference type="ChEBI" id="CHEBI:15378"/>
        <dbReference type="ChEBI" id="CHEBI:16709"/>
        <dbReference type="ChEBI" id="CHEBI:30616"/>
        <dbReference type="ChEBI" id="CHEBI:58589"/>
        <dbReference type="ChEBI" id="CHEBI:456216"/>
        <dbReference type="EC" id="2.7.1.35"/>
    </reaction>
</comment>
<comment type="catalytic activity">
    <reaction evidence="1">
        <text>pyridoxamine + ATP = pyridoxamine 5'-phosphate + ADP + H(+)</text>
        <dbReference type="Rhea" id="RHEA:25104"/>
        <dbReference type="ChEBI" id="CHEBI:15378"/>
        <dbReference type="ChEBI" id="CHEBI:30616"/>
        <dbReference type="ChEBI" id="CHEBI:57761"/>
        <dbReference type="ChEBI" id="CHEBI:58451"/>
        <dbReference type="ChEBI" id="CHEBI:456216"/>
        <dbReference type="EC" id="2.7.1.35"/>
    </reaction>
</comment>
<comment type="cofactor">
    <cofactor evidence="1">
        <name>Mg(2+)</name>
        <dbReference type="ChEBI" id="CHEBI:18420"/>
    </cofactor>
</comment>
<comment type="pathway">
    <text evidence="1">Cofactor metabolism; pyridoxal 5'-phosphate salvage; pyridoxal 5'-phosphate from pyridoxal: step 1/1.</text>
</comment>
<comment type="pathway">
    <text evidence="1">Cofactor metabolism; pyridoxal 5'-phosphate salvage; pyridoxine 5'-phosphate from pyridoxine: step 1/1.</text>
</comment>
<comment type="pathway">
    <text evidence="1">Cofactor metabolism; pyridoxal 5'-phosphate salvage; pyridoxamine 5'-phosphate from pyridoxamine: step 1/1.</text>
</comment>
<comment type="subunit">
    <text evidence="1">Homodimer.</text>
</comment>
<comment type="similarity">
    <text evidence="1">Belongs to the pyridoxine kinase family. PdxK subfamily.</text>
</comment>
<feature type="chain" id="PRO_1000186799" description="Pyridoxine/pyridoxal/pyridoxamine kinase">
    <location>
        <begin position="1"/>
        <end position="283"/>
    </location>
</feature>
<feature type="binding site" evidence="1">
    <location>
        <position position="23"/>
    </location>
    <ligand>
        <name>substrate</name>
    </ligand>
</feature>
<feature type="binding site" evidence="1">
    <location>
        <position position="59"/>
    </location>
    <ligand>
        <name>substrate</name>
    </ligand>
</feature>
<feature type="binding site" evidence="1">
    <location>
        <position position="125"/>
    </location>
    <ligand>
        <name>ATP</name>
        <dbReference type="ChEBI" id="CHEBI:30616"/>
    </ligand>
</feature>
<feature type="binding site" evidence="1">
    <location>
        <position position="136"/>
    </location>
    <ligand>
        <name>Mg(2+)</name>
        <dbReference type="ChEBI" id="CHEBI:18420"/>
    </ligand>
</feature>
<feature type="binding site" evidence="1">
    <location>
        <position position="157"/>
    </location>
    <ligand>
        <name>ATP</name>
        <dbReference type="ChEBI" id="CHEBI:30616"/>
    </ligand>
</feature>
<feature type="binding site" evidence="1">
    <location>
        <position position="162"/>
    </location>
    <ligand>
        <name>ATP</name>
        <dbReference type="ChEBI" id="CHEBI:30616"/>
    </ligand>
</feature>
<feature type="binding site" evidence="1">
    <location>
        <position position="162"/>
    </location>
    <ligand>
        <name>Mg(2+)</name>
        <dbReference type="ChEBI" id="CHEBI:18420"/>
    </ligand>
</feature>
<feature type="binding site" evidence="1">
    <location>
        <position position="195"/>
    </location>
    <ligand>
        <name>ATP</name>
        <dbReference type="ChEBI" id="CHEBI:30616"/>
    </ligand>
</feature>
<feature type="binding site" evidence="1">
    <location>
        <begin position="221"/>
        <end position="224"/>
    </location>
    <ligand>
        <name>ATP</name>
        <dbReference type="ChEBI" id="CHEBI:30616"/>
    </ligand>
</feature>
<feature type="binding site" evidence="1">
    <location>
        <position position="231"/>
    </location>
    <ligand>
        <name>ATP</name>
        <dbReference type="ChEBI" id="CHEBI:30616"/>
    </ligand>
</feature>
<feature type="binding site" evidence="1">
    <location>
        <position position="233"/>
    </location>
    <ligand>
        <name>substrate</name>
    </ligand>
</feature>
<evidence type="ECO:0000255" key="1">
    <source>
        <dbReference type="HAMAP-Rule" id="MF_01638"/>
    </source>
</evidence>
<proteinExistence type="inferred from homology"/>
<protein>
    <recommendedName>
        <fullName evidence="1">Pyridoxine/pyridoxal/pyridoxamine kinase</fullName>
        <shortName evidence="1">PN/PL/PM kinase</shortName>
        <ecNumber evidence="1">2.7.1.35</ecNumber>
    </recommendedName>
    <alternativeName>
        <fullName evidence="1">B6-vitamer kinase</fullName>
    </alternativeName>
</protein>